<feature type="chain" id="PRO_0000206449" description="3-ketoacyl-CoA thiolase">
    <location>
        <begin position="1"/>
        <end position="435"/>
    </location>
</feature>
<feature type="active site" description="Acyl-thioester intermediate" evidence="1">
    <location>
        <position position="98"/>
    </location>
</feature>
<feature type="active site" description="Proton acceptor" evidence="1">
    <location>
        <position position="391"/>
    </location>
</feature>
<feature type="active site" description="Proton acceptor" evidence="1">
    <location>
        <position position="421"/>
    </location>
</feature>
<gene>
    <name evidence="1" type="primary">fadI</name>
    <name type="ordered locus">VC_1046</name>
</gene>
<accession>Q9KT59</accession>
<name>FADI_VIBCH</name>
<proteinExistence type="inferred from homology"/>
<reference key="1">
    <citation type="journal article" date="2000" name="Nature">
        <title>DNA sequence of both chromosomes of the cholera pathogen Vibrio cholerae.</title>
        <authorList>
            <person name="Heidelberg J.F."/>
            <person name="Eisen J.A."/>
            <person name="Nelson W.C."/>
            <person name="Clayton R.A."/>
            <person name="Gwinn M.L."/>
            <person name="Dodson R.J."/>
            <person name="Haft D.H."/>
            <person name="Hickey E.K."/>
            <person name="Peterson J.D."/>
            <person name="Umayam L.A."/>
            <person name="Gill S.R."/>
            <person name="Nelson K.E."/>
            <person name="Read T.D."/>
            <person name="Tettelin H."/>
            <person name="Richardson D.L."/>
            <person name="Ermolaeva M.D."/>
            <person name="Vamathevan J.J."/>
            <person name="Bass S."/>
            <person name="Qin H."/>
            <person name="Dragoi I."/>
            <person name="Sellers P."/>
            <person name="McDonald L.A."/>
            <person name="Utterback T.R."/>
            <person name="Fleischmann R.D."/>
            <person name="Nierman W.C."/>
            <person name="White O."/>
            <person name="Salzberg S.L."/>
            <person name="Smith H.O."/>
            <person name="Colwell R.R."/>
            <person name="Mekalanos J.J."/>
            <person name="Venter J.C."/>
            <person name="Fraser C.M."/>
        </authorList>
    </citation>
    <scope>NUCLEOTIDE SEQUENCE [LARGE SCALE GENOMIC DNA]</scope>
    <source>
        <strain>ATCC 39315 / El Tor Inaba N16961</strain>
    </source>
</reference>
<comment type="function">
    <text evidence="1">Catalyzes the final step of fatty acid oxidation in which acetyl-CoA is released and the CoA ester of a fatty acid two carbons shorter is formed.</text>
</comment>
<comment type="catalytic activity">
    <reaction evidence="1">
        <text>an acyl-CoA + acetyl-CoA = a 3-oxoacyl-CoA + CoA</text>
        <dbReference type="Rhea" id="RHEA:21564"/>
        <dbReference type="ChEBI" id="CHEBI:57287"/>
        <dbReference type="ChEBI" id="CHEBI:57288"/>
        <dbReference type="ChEBI" id="CHEBI:58342"/>
        <dbReference type="ChEBI" id="CHEBI:90726"/>
        <dbReference type="EC" id="2.3.1.16"/>
    </reaction>
</comment>
<comment type="pathway">
    <text evidence="1">Lipid metabolism; fatty acid beta-oxidation.</text>
</comment>
<comment type="subunit">
    <text evidence="1">Heterotetramer of two alpha chains (FadJ) and two beta chains (FadI).</text>
</comment>
<comment type="subcellular location">
    <subcellularLocation>
        <location evidence="1">Cytoplasm</location>
    </subcellularLocation>
</comment>
<comment type="similarity">
    <text evidence="1">Belongs to the thiolase-like superfamily. Thiolase family.</text>
</comment>
<comment type="sequence caution" evidence="2">
    <conflict type="erroneous initiation">
        <sequence resource="EMBL-CDS" id="AAF94205"/>
    </conflict>
</comment>
<organism>
    <name type="scientific">Vibrio cholerae serotype O1 (strain ATCC 39315 / El Tor Inaba N16961)</name>
    <dbReference type="NCBI Taxonomy" id="243277"/>
    <lineage>
        <taxon>Bacteria</taxon>
        <taxon>Pseudomonadati</taxon>
        <taxon>Pseudomonadota</taxon>
        <taxon>Gammaproteobacteria</taxon>
        <taxon>Vibrionales</taxon>
        <taxon>Vibrionaceae</taxon>
        <taxon>Vibrio</taxon>
    </lineage>
</organism>
<protein>
    <recommendedName>
        <fullName evidence="1">3-ketoacyl-CoA thiolase</fullName>
        <ecNumber evidence="1">2.3.1.16</ecNumber>
    </recommendedName>
    <alternativeName>
        <fullName evidence="1">ACSs</fullName>
    </alternativeName>
    <alternativeName>
        <fullName evidence="1">Acetyl-CoA acyltransferase</fullName>
    </alternativeName>
    <alternativeName>
        <fullName evidence="1">Acyl-CoA ligase</fullName>
    </alternativeName>
    <alternativeName>
        <fullName evidence="1">Beta-ketothiolase</fullName>
    </alternativeName>
    <alternativeName>
        <fullName evidence="1">Fatty acid oxidation complex subunit beta</fullName>
    </alternativeName>
</protein>
<dbReference type="EC" id="2.3.1.16" evidence="1"/>
<dbReference type="EMBL" id="AE003852">
    <property type="protein sequence ID" value="AAF94205.1"/>
    <property type="status" value="ALT_INIT"/>
    <property type="molecule type" value="Genomic_DNA"/>
</dbReference>
<dbReference type="PIR" id="E82248">
    <property type="entry name" value="E82248"/>
</dbReference>
<dbReference type="RefSeq" id="NP_230691.2">
    <property type="nucleotide sequence ID" value="NC_002505.1"/>
</dbReference>
<dbReference type="RefSeq" id="WP_000517921.1">
    <property type="nucleotide sequence ID" value="NZ_LT906614.1"/>
</dbReference>
<dbReference type="SMR" id="Q9KT59"/>
<dbReference type="STRING" id="243277.VC_1046"/>
<dbReference type="DNASU" id="2614316"/>
<dbReference type="EnsemblBacteria" id="AAF94205">
    <property type="protein sequence ID" value="AAF94205"/>
    <property type="gene ID" value="VC_1046"/>
</dbReference>
<dbReference type="KEGG" id="vch:VC_1046"/>
<dbReference type="PATRIC" id="fig|243277.26.peg.998"/>
<dbReference type="eggNOG" id="COG0183">
    <property type="taxonomic scope" value="Bacteria"/>
</dbReference>
<dbReference type="HOGENOM" id="CLU_031026_2_0_6"/>
<dbReference type="UniPathway" id="UPA00659"/>
<dbReference type="Proteomes" id="UP000000584">
    <property type="component" value="Chromosome 1"/>
</dbReference>
<dbReference type="GO" id="GO:0005829">
    <property type="term" value="C:cytosol"/>
    <property type="evidence" value="ECO:0000318"/>
    <property type="project" value="GO_Central"/>
</dbReference>
<dbReference type="GO" id="GO:0003985">
    <property type="term" value="F:acetyl-CoA C-acetyltransferase activity"/>
    <property type="evidence" value="ECO:0000318"/>
    <property type="project" value="GO_Central"/>
</dbReference>
<dbReference type="GO" id="GO:0006635">
    <property type="term" value="P:fatty acid beta-oxidation"/>
    <property type="evidence" value="ECO:0007669"/>
    <property type="project" value="UniProtKB-UniRule"/>
</dbReference>
<dbReference type="CDD" id="cd00751">
    <property type="entry name" value="thiolase"/>
    <property type="match status" value="1"/>
</dbReference>
<dbReference type="FunFam" id="3.40.47.10:FF:000011">
    <property type="entry name" value="3-ketoacyl-CoA thiolase"/>
    <property type="match status" value="1"/>
</dbReference>
<dbReference type="Gene3D" id="3.40.47.10">
    <property type="match status" value="1"/>
</dbReference>
<dbReference type="HAMAP" id="MF_01618">
    <property type="entry name" value="FadI"/>
    <property type="match status" value="1"/>
</dbReference>
<dbReference type="InterPro" id="IPR012806">
    <property type="entry name" value="Ac-CoA_C-AcTrfase_FadI"/>
</dbReference>
<dbReference type="InterPro" id="IPR002155">
    <property type="entry name" value="Thiolase"/>
</dbReference>
<dbReference type="InterPro" id="IPR016039">
    <property type="entry name" value="Thiolase-like"/>
</dbReference>
<dbReference type="InterPro" id="IPR020617">
    <property type="entry name" value="Thiolase_C"/>
</dbReference>
<dbReference type="InterPro" id="IPR020613">
    <property type="entry name" value="Thiolase_CS"/>
</dbReference>
<dbReference type="InterPro" id="IPR020616">
    <property type="entry name" value="Thiolase_N"/>
</dbReference>
<dbReference type="NCBIfam" id="TIGR01930">
    <property type="entry name" value="AcCoA-C-Actrans"/>
    <property type="match status" value="1"/>
</dbReference>
<dbReference type="NCBIfam" id="TIGR02446">
    <property type="entry name" value="FadI"/>
    <property type="match status" value="1"/>
</dbReference>
<dbReference type="NCBIfam" id="NF006516">
    <property type="entry name" value="PRK08963.1"/>
    <property type="match status" value="1"/>
</dbReference>
<dbReference type="PANTHER" id="PTHR18919:SF107">
    <property type="entry name" value="ACETYL-COA ACETYLTRANSFERASE, CYTOSOLIC"/>
    <property type="match status" value="1"/>
</dbReference>
<dbReference type="PANTHER" id="PTHR18919">
    <property type="entry name" value="ACETYL-COA C-ACYLTRANSFERASE"/>
    <property type="match status" value="1"/>
</dbReference>
<dbReference type="Pfam" id="PF02803">
    <property type="entry name" value="Thiolase_C"/>
    <property type="match status" value="1"/>
</dbReference>
<dbReference type="Pfam" id="PF00108">
    <property type="entry name" value="Thiolase_N"/>
    <property type="match status" value="1"/>
</dbReference>
<dbReference type="PIRSF" id="PIRSF000429">
    <property type="entry name" value="Ac-CoA_Ac_transf"/>
    <property type="match status" value="1"/>
</dbReference>
<dbReference type="SUPFAM" id="SSF53901">
    <property type="entry name" value="Thiolase-like"/>
    <property type="match status" value="2"/>
</dbReference>
<dbReference type="PROSITE" id="PS00737">
    <property type="entry name" value="THIOLASE_2"/>
    <property type="match status" value="1"/>
</dbReference>
<keyword id="KW-0012">Acyltransferase</keyword>
<keyword id="KW-0963">Cytoplasm</keyword>
<keyword id="KW-0276">Fatty acid metabolism</keyword>
<keyword id="KW-0442">Lipid degradation</keyword>
<keyword id="KW-0443">Lipid metabolism</keyword>
<keyword id="KW-1185">Reference proteome</keyword>
<keyword id="KW-0808">Transferase</keyword>
<evidence type="ECO:0000255" key="1">
    <source>
        <dbReference type="HAMAP-Rule" id="MF_01618"/>
    </source>
</evidence>
<evidence type="ECO:0000305" key="2"/>
<sequence>MGKQEVRTRSGERVAIVAGLRTPFARQSTEFGQVPAVDLGKMVVQEMMARTAIDPKLIEQVVFGQVVQMPEAPNIAREIVLGTGMSINTDAYSVTRACATSFQAAVNVAESIMAGSIDIGIAGGADSSSVLPIGVSKKLAASLLALSKTKTVGQKLKLLSNLSFKDLMPVPPAVAEYSTGLSMGQTAEQMAKSYAISRAEQDALAHRSHTLAAQAWAEGKIRDEVMTAFPEPYKKWLDMDNNIRMDSKLESYAKLRPAFDRQYGSVTAANSTPLTDGAAAIMLMREGKAKELGLEIMGYIRSYAFAAIGVEKDMLMGPSYATPIALDRAGITLNDLTLIDMHEAFAAQTLANLKMFASDKFAQEQLGRAQAIGEVDMSKFNVLGGSLAYGHPFAATGARMITQTLRELKRRGGGLALNTACAAGGLGAAMILEVE</sequence>